<comment type="function">
    <text evidence="1">Capsid protein self-assembles to form an icosahedral capsid with a T=3 symmetry, about 26 nm in diameter, and consisting of 89 capsid proteins dimers (178 capsid proteins). Involved in viral genome encapsidation through the interaction between a capsid protein dimer and the multiple packaging signals present in the RNA genome. The capsid also contains 1 copy of the A2 maturation protein.</text>
</comment>
<comment type="function">
    <text evidence="1">Acts as a translational repressor of viral replicase synthesis late in infection. This latter function is the result of capsid protein interaction with an RNA hairpin which contains the replicase ribosome-binding site.</text>
</comment>
<comment type="subunit">
    <text evidence="1">Homodimer. The capsid proteins form dimers that assemble by group of 5. Twelve such pentamers are linked together with free dimers. The homodimers binds to the viral RNA via an operator hairpin, but also to many other RNA sequences in the viral genome; this interaction probably shifts the virus from the replicative to the assembly phase and ensures specific encapsidation of the viral genome.</text>
</comment>
<comment type="subcellular location">
    <subcellularLocation>
        <location evidence="1">Virion</location>
    </subcellularLocation>
    <text evidence="1">The shell is composed of 178 copies of the capsid protein and 1 copy of the maturation protein.</text>
</comment>
<comment type="similarity">
    <text evidence="3">Belongs to the Leviviricetes capsid protein family.</text>
</comment>
<keyword id="KW-0167">Capsid protein</keyword>
<keyword id="KW-0694">RNA-binding</keyword>
<keyword id="KW-1142">T=3 icosahedral capsid protein</keyword>
<keyword id="KW-0810">Translation regulation</keyword>
<keyword id="KW-0946">Virion</keyword>
<evidence type="ECO:0000250" key="1">
    <source>
        <dbReference type="UniProtKB" id="P03612"/>
    </source>
</evidence>
<evidence type="ECO:0000250" key="2">
    <source>
        <dbReference type="UniProtKB" id="P69171"/>
    </source>
</evidence>
<evidence type="ECO:0000305" key="3"/>
<reference key="1">
    <citation type="journal article" date="1989" name="Virology">
        <title>Nucleotide sequence from the ssRNA bacteriophage JP34 resolves the discrepancy between serological and biophysical classification.</title>
        <authorList>
            <person name="Adhin M.R."/>
            <person name="Hirashima A."/>
            <person name="van Duin J."/>
        </authorList>
    </citation>
    <scope>NUCLEOTIDE SEQUENCE [GENOMIC RNA]</scope>
</reference>
<name>CAPSD_BPJP3</name>
<accession>P34700</accession>
<feature type="initiator methionine" description="Removed; by host" evidence="2">
    <location>
        <position position="1"/>
    </location>
</feature>
<feature type="chain" id="PRO_0000164842" description="Capsid protein">
    <location>
        <begin position="2"/>
        <end position="130"/>
    </location>
</feature>
<feature type="region of interest" description="Viral RNA-binding" evidence="1">
    <location>
        <begin position="31"/>
        <end position="104"/>
    </location>
</feature>
<proteinExistence type="inferred from homology"/>
<protein>
    <recommendedName>
        <fullName>Capsid protein</fullName>
        <shortName>CP</shortName>
    </recommendedName>
    <alternativeName>
        <fullName>Coat protein</fullName>
    </alternativeName>
</protein>
<organismHost>
    <name type="scientific">Escherichia coli</name>
    <dbReference type="NCBI Taxonomy" id="562"/>
</organismHost>
<organism>
    <name type="scientific">Enterobacteria phage JP34</name>
    <name type="common">Bacteriophage JP34</name>
    <dbReference type="NCBI Taxonomy" id="12019"/>
    <lineage>
        <taxon>Viruses</taxon>
        <taxon>Riboviria</taxon>
        <taxon>Orthornavirae</taxon>
        <taxon>Lenarviricota</taxon>
        <taxon>Leviviricetes</taxon>
        <taxon>Norzivirales</taxon>
        <taxon>Fiersviridae</taxon>
        <taxon>Emesvirus</taxon>
        <taxon>Escherichia phage BZ13</taxon>
    </lineage>
</organism>
<dbReference type="EMBL" id="J04343">
    <property type="protein sequence ID" value="AAA72210.1"/>
    <property type="molecule type" value="Genomic_RNA"/>
</dbReference>
<dbReference type="PIR" id="A46324">
    <property type="entry name" value="A46324"/>
</dbReference>
<dbReference type="SMR" id="P34700"/>
<dbReference type="GO" id="GO:0039617">
    <property type="term" value="C:T=3 icosahedral viral capsid"/>
    <property type="evidence" value="ECO:0007669"/>
    <property type="project" value="UniProtKB-KW"/>
</dbReference>
<dbReference type="GO" id="GO:0003723">
    <property type="term" value="F:RNA binding"/>
    <property type="evidence" value="ECO:0007669"/>
    <property type="project" value="UniProtKB-KW"/>
</dbReference>
<dbReference type="GO" id="GO:0005198">
    <property type="term" value="F:structural molecule activity"/>
    <property type="evidence" value="ECO:0007669"/>
    <property type="project" value="InterPro"/>
</dbReference>
<dbReference type="GO" id="GO:0006417">
    <property type="term" value="P:regulation of translation"/>
    <property type="evidence" value="ECO:0007669"/>
    <property type="project" value="UniProtKB-KW"/>
</dbReference>
<dbReference type="Gene3D" id="3.30.380.10">
    <property type="entry name" value="MS2 Viral Coat Protein"/>
    <property type="match status" value="1"/>
</dbReference>
<dbReference type="InterPro" id="IPR002703">
    <property type="entry name" value="Levivir_coat"/>
</dbReference>
<dbReference type="InterPro" id="IPR015954">
    <property type="entry name" value="Phage_RNA-type_capsid"/>
</dbReference>
<dbReference type="Pfam" id="PF01819">
    <property type="entry name" value="Levi_coat"/>
    <property type="match status" value="1"/>
</dbReference>
<dbReference type="SUPFAM" id="SSF55405">
    <property type="entry name" value="RNA bacteriophage capsid protein"/>
    <property type="match status" value="1"/>
</dbReference>
<sequence>MATLRSFVLVDNGGTGDVTVVPVSNANGVAEWLSNNSRSQAYRVTASYRASGADKRKYTIKLEVPKIVTQVVNGVELPVSAWKAYASIDLTIPIFAATDDVTVISKSLAGLFKVGNPIADAISSQSGFYA</sequence>